<keyword id="KW-0002">3D-structure</keyword>
<keyword id="KW-0472">Membrane</keyword>
<keyword id="KW-0496">Mitochondrion</keyword>
<keyword id="KW-1000">Mitochondrion outer membrane</keyword>
<keyword id="KW-1185">Reference proteome</keyword>
<keyword id="KW-0812">Transmembrane</keyword>
<keyword id="KW-1133">Transmembrane helix</keyword>
<feature type="chain" id="PRO_0000313660" description="Mitoguardin 2">
    <location>
        <begin position="1"/>
        <end position="596"/>
    </location>
</feature>
<feature type="transmembrane region" description="Helical" evidence="2">
    <location>
        <begin position="11"/>
        <end position="31"/>
    </location>
</feature>
<feature type="transmembrane region" description="Helical" evidence="2">
    <location>
        <begin position="40"/>
        <end position="60"/>
    </location>
</feature>
<feature type="region of interest" description="Disordered" evidence="3">
    <location>
        <begin position="67"/>
        <end position="158"/>
    </location>
</feature>
<feature type="region of interest" description="Disordered" evidence="3">
    <location>
        <begin position="576"/>
        <end position="596"/>
    </location>
</feature>
<feature type="compositionally biased region" description="Polar residues" evidence="3">
    <location>
        <begin position="110"/>
        <end position="123"/>
    </location>
</feature>
<feature type="compositionally biased region" description="Low complexity" evidence="3">
    <location>
        <begin position="124"/>
        <end position="140"/>
    </location>
</feature>
<feature type="compositionally biased region" description="Polar residues" evidence="3">
    <location>
        <begin position="143"/>
        <end position="152"/>
    </location>
</feature>
<feature type="compositionally biased region" description="Polar residues" evidence="3">
    <location>
        <begin position="583"/>
        <end position="596"/>
    </location>
</feature>
<feature type="helix" evidence="6">
    <location>
        <begin position="314"/>
        <end position="325"/>
    </location>
</feature>
<feature type="turn" evidence="6">
    <location>
        <begin position="335"/>
        <end position="339"/>
    </location>
</feature>
<feature type="helix" evidence="6">
    <location>
        <begin position="343"/>
        <end position="360"/>
    </location>
</feature>
<feature type="helix" evidence="6">
    <location>
        <begin position="364"/>
        <end position="383"/>
    </location>
</feature>
<feature type="turn" evidence="6">
    <location>
        <begin position="384"/>
        <end position="386"/>
    </location>
</feature>
<feature type="helix" evidence="6">
    <location>
        <begin position="390"/>
        <end position="404"/>
    </location>
</feature>
<feature type="helix" evidence="6">
    <location>
        <begin position="406"/>
        <end position="408"/>
    </location>
</feature>
<feature type="helix" evidence="6">
    <location>
        <begin position="409"/>
        <end position="418"/>
    </location>
</feature>
<feature type="helix" evidence="6">
    <location>
        <begin position="426"/>
        <end position="429"/>
    </location>
</feature>
<feature type="helix" evidence="6">
    <location>
        <begin position="430"/>
        <end position="434"/>
    </location>
</feature>
<feature type="helix" evidence="6">
    <location>
        <begin position="435"/>
        <end position="441"/>
    </location>
</feature>
<feature type="helix" evidence="6">
    <location>
        <begin position="447"/>
        <end position="453"/>
    </location>
</feature>
<feature type="helix" evidence="6">
    <location>
        <begin position="460"/>
        <end position="479"/>
    </location>
</feature>
<feature type="helix" evidence="6">
    <location>
        <begin position="488"/>
        <end position="507"/>
    </location>
</feature>
<feature type="strand" evidence="6">
    <location>
        <begin position="508"/>
        <end position="510"/>
    </location>
</feature>
<feature type="helix" evidence="6">
    <location>
        <begin position="514"/>
        <end position="532"/>
    </location>
</feature>
<feature type="turn" evidence="6">
    <location>
        <begin position="535"/>
        <end position="537"/>
    </location>
</feature>
<feature type="helix" evidence="6">
    <location>
        <begin position="543"/>
        <end position="565"/>
    </location>
</feature>
<gene>
    <name evidence="1" type="primary">miga2</name>
    <name evidence="1" type="synonym">fam73b</name>
    <name evidence="4" type="ORF">zgc:113131</name>
</gene>
<evidence type="ECO:0000250" key="1">
    <source>
        <dbReference type="UniProtKB" id="Q7L4E1"/>
    </source>
</evidence>
<evidence type="ECO:0000255" key="2"/>
<evidence type="ECO:0000256" key="3">
    <source>
        <dbReference type="SAM" id="MobiDB-lite"/>
    </source>
</evidence>
<evidence type="ECO:0000303" key="4">
    <source ref="1"/>
</evidence>
<evidence type="ECO:0000305" key="5"/>
<evidence type="ECO:0007829" key="6">
    <source>
        <dbReference type="PDB" id="7X15"/>
    </source>
</evidence>
<sequence length="596" mass="66256">MSFRSAEGVSIMQALAMTVAEIPVFLYSTFGQSIFSQLKLSPSLKKVLFATALGSVALALTAHQLKRRGRKRKQTLGKEAQKPVGIPEQLLRSSRPASLKRGPVPARQMMSPSTRSNDTLSGVSSIAQSKHSSSSHSIASMRVPSSPNQSVNAGAAWEAEPVAEEPAVGEDANAENLYLMGMELFEEALRKWELALNIRHRSHSRASASNSQGSELVERHSPEVRNHQFAERLETLLHRAYHLQEDFGSTIPPDSLLADLESEGTLILPTLGSSHPIQDDDATTVTSDDSFFSAAELFETFSLEDSFHLLKPAALYEEALSLVKDGDVACRSLRTELLECYSDQDFLAKLHCVRQAFQVLLLDETHRMFFMETGKQMISGLLVKANKSPKAFLESYEDMLQYTQREETWPVSKMELEGRGVVCMNFFDIVLDFILMDAFEDLESPPSSVVAVLRNRWLSDSFKETALATACWSVLKAKRRLLMVPDGFIAHFYVISEHVSPVLAFGFLGPHQHLSEVCTIFKQQIVQYLKDMFDHDKVRFTSVPSLAEDILRLSHRRADILMGYLGIENLPETNGALPKSPCQAESGNLDASGQQD</sequence>
<dbReference type="EMBL" id="BC090475">
    <property type="protein sequence ID" value="AAH90475.1"/>
    <property type="molecule type" value="mRNA"/>
</dbReference>
<dbReference type="RefSeq" id="NP_001013575.1">
    <property type="nucleotide sequence ID" value="NM_001013557.2"/>
</dbReference>
<dbReference type="PDB" id="7X15">
    <property type="method" value="X-ray"/>
    <property type="resolution" value="2.85 A"/>
    <property type="chains" value="A=310-568"/>
</dbReference>
<dbReference type="PDBsum" id="7X15"/>
<dbReference type="SMR" id="Q5BLE2"/>
<dbReference type="FunCoup" id="Q5BLE2">
    <property type="interactions" value="1044"/>
</dbReference>
<dbReference type="STRING" id="7955.ENSDARP00000109341"/>
<dbReference type="PaxDb" id="7955-ENSDARP00000109341"/>
<dbReference type="GeneID" id="541431"/>
<dbReference type="KEGG" id="dre:541431"/>
<dbReference type="AGR" id="ZFIN:ZDB-GENE-050320-135"/>
<dbReference type="CTD" id="84895"/>
<dbReference type="ZFIN" id="ZDB-GENE-050320-135">
    <property type="gene designation" value="miga2"/>
</dbReference>
<dbReference type="eggNOG" id="KOG3831">
    <property type="taxonomic scope" value="Eukaryota"/>
</dbReference>
<dbReference type="InParanoid" id="Q5BLE2"/>
<dbReference type="OrthoDB" id="8880065at2759"/>
<dbReference type="PhylomeDB" id="Q5BLE2"/>
<dbReference type="Reactome" id="R-DRE-1483166">
    <property type="pathway name" value="Synthesis of PA"/>
</dbReference>
<dbReference type="PRO" id="PR:Q5BLE2"/>
<dbReference type="Proteomes" id="UP000000437">
    <property type="component" value="Chromosome 21"/>
</dbReference>
<dbReference type="GO" id="GO:0005741">
    <property type="term" value="C:mitochondrial outer membrane"/>
    <property type="evidence" value="ECO:0007669"/>
    <property type="project" value="UniProtKB-SubCell"/>
</dbReference>
<dbReference type="GO" id="GO:0005886">
    <property type="term" value="C:plasma membrane"/>
    <property type="evidence" value="ECO:0000250"/>
    <property type="project" value="UniProtKB"/>
</dbReference>
<dbReference type="GO" id="GO:0046982">
    <property type="term" value="F:protein heterodimerization activity"/>
    <property type="evidence" value="ECO:0000250"/>
    <property type="project" value="UniProtKB"/>
</dbReference>
<dbReference type="GO" id="GO:0042803">
    <property type="term" value="F:protein homodimerization activity"/>
    <property type="evidence" value="ECO:0000250"/>
    <property type="project" value="UniProtKB"/>
</dbReference>
<dbReference type="GO" id="GO:0008053">
    <property type="term" value="P:mitochondrial fusion"/>
    <property type="evidence" value="ECO:0000250"/>
    <property type="project" value="UniProtKB"/>
</dbReference>
<dbReference type="InterPro" id="IPR019392">
    <property type="entry name" value="Miga"/>
</dbReference>
<dbReference type="PANTHER" id="PTHR21508">
    <property type="entry name" value="MITOGUARDIN"/>
    <property type="match status" value="1"/>
</dbReference>
<dbReference type="PANTHER" id="PTHR21508:SF4">
    <property type="entry name" value="MITOGUARDIN 2"/>
    <property type="match status" value="1"/>
</dbReference>
<dbReference type="Pfam" id="PF10265">
    <property type="entry name" value="Miga"/>
    <property type="match status" value="1"/>
</dbReference>
<accession>Q5BLE2</accession>
<reference key="1">
    <citation type="submission" date="2005-02" db="EMBL/GenBank/DDBJ databases">
        <authorList>
            <consortium name="NIH - Zebrafish Gene Collection (ZGC) project"/>
        </authorList>
    </citation>
    <scope>NUCLEOTIDE SEQUENCE [LARGE SCALE MRNA]</scope>
    <source>
        <tissue>Embryo</tissue>
    </source>
</reference>
<protein>
    <recommendedName>
        <fullName evidence="1">Mitoguardin 2</fullName>
    </recommendedName>
    <alternativeName>
        <fullName evidence="5">Protein FAM73B</fullName>
    </alternativeName>
</protein>
<name>MIGA2_DANRE</name>
<organism>
    <name type="scientific">Danio rerio</name>
    <name type="common">Zebrafish</name>
    <name type="synonym">Brachydanio rerio</name>
    <dbReference type="NCBI Taxonomy" id="7955"/>
    <lineage>
        <taxon>Eukaryota</taxon>
        <taxon>Metazoa</taxon>
        <taxon>Chordata</taxon>
        <taxon>Craniata</taxon>
        <taxon>Vertebrata</taxon>
        <taxon>Euteleostomi</taxon>
        <taxon>Actinopterygii</taxon>
        <taxon>Neopterygii</taxon>
        <taxon>Teleostei</taxon>
        <taxon>Ostariophysi</taxon>
        <taxon>Cypriniformes</taxon>
        <taxon>Danionidae</taxon>
        <taxon>Danioninae</taxon>
        <taxon>Danio</taxon>
    </lineage>
</organism>
<comment type="function">
    <text evidence="1">Regulator of mitochondrial fusion: acts by forming homo- and heterodimers at the mitochondrial outer membrane and facilitating the formation of pld6/MitoPLD dimers. May act by regulating phospholipid metabolism via pld6/MitoPLD.</text>
</comment>
<comment type="subunit">
    <text evidence="1">Homodimer and heterodimer; forms heterodimers with miga1.</text>
</comment>
<comment type="subcellular location">
    <subcellularLocation>
        <location evidence="1">Mitochondrion outer membrane</location>
        <topology evidence="2">Multi-pass membrane protein</topology>
    </subcellularLocation>
</comment>
<comment type="similarity">
    <text evidence="5">Belongs to the mitoguardin family.</text>
</comment>
<proteinExistence type="evidence at protein level"/>